<accession>Q2KY40</accession>
<name>COAD_BORA1</name>
<protein>
    <recommendedName>
        <fullName evidence="1">Phosphopantetheine adenylyltransferase</fullName>
        <ecNumber evidence="1">2.7.7.3</ecNumber>
    </recommendedName>
    <alternativeName>
        <fullName evidence="1">Dephospho-CoA pyrophosphorylase</fullName>
    </alternativeName>
    <alternativeName>
        <fullName evidence="1">Pantetheine-phosphate adenylyltransferase</fullName>
        <shortName evidence="1">PPAT</shortName>
    </alternativeName>
</protein>
<keyword id="KW-0067">ATP-binding</keyword>
<keyword id="KW-0173">Coenzyme A biosynthesis</keyword>
<keyword id="KW-0963">Cytoplasm</keyword>
<keyword id="KW-0460">Magnesium</keyword>
<keyword id="KW-0547">Nucleotide-binding</keyword>
<keyword id="KW-0548">Nucleotidyltransferase</keyword>
<keyword id="KW-1185">Reference proteome</keyword>
<keyword id="KW-0808">Transferase</keyword>
<proteinExistence type="inferred from homology"/>
<feature type="chain" id="PRO_1000011096" description="Phosphopantetheine adenylyltransferase">
    <location>
        <begin position="1"/>
        <end position="167"/>
    </location>
</feature>
<feature type="binding site" evidence="1">
    <location>
        <begin position="9"/>
        <end position="10"/>
    </location>
    <ligand>
        <name>ATP</name>
        <dbReference type="ChEBI" id="CHEBI:30616"/>
    </ligand>
</feature>
<feature type="binding site" evidence="1">
    <location>
        <position position="9"/>
    </location>
    <ligand>
        <name>substrate</name>
    </ligand>
</feature>
<feature type="binding site" evidence="1">
    <location>
        <position position="17"/>
    </location>
    <ligand>
        <name>ATP</name>
        <dbReference type="ChEBI" id="CHEBI:30616"/>
    </ligand>
</feature>
<feature type="binding site" evidence="1">
    <location>
        <position position="41"/>
    </location>
    <ligand>
        <name>substrate</name>
    </ligand>
</feature>
<feature type="binding site" evidence="1">
    <location>
        <position position="73"/>
    </location>
    <ligand>
        <name>substrate</name>
    </ligand>
</feature>
<feature type="binding site" evidence="1">
    <location>
        <position position="87"/>
    </location>
    <ligand>
        <name>substrate</name>
    </ligand>
</feature>
<feature type="binding site" evidence="1">
    <location>
        <begin position="88"/>
        <end position="90"/>
    </location>
    <ligand>
        <name>ATP</name>
        <dbReference type="ChEBI" id="CHEBI:30616"/>
    </ligand>
</feature>
<feature type="binding site" evidence="1">
    <location>
        <position position="98"/>
    </location>
    <ligand>
        <name>ATP</name>
        <dbReference type="ChEBI" id="CHEBI:30616"/>
    </ligand>
</feature>
<feature type="binding site" evidence="1">
    <location>
        <begin position="123"/>
        <end position="129"/>
    </location>
    <ligand>
        <name>ATP</name>
        <dbReference type="ChEBI" id="CHEBI:30616"/>
    </ligand>
</feature>
<feature type="site" description="Transition state stabilizer" evidence="1">
    <location>
        <position position="17"/>
    </location>
</feature>
<gene>
    <name evidence="1" type="primary">coaD</name>
    <name type="ordered locus">BAV0563</name>
</gene>
<sequence length="167" mass="19143">MITAVYPGTFDPLTRGHEDLVRRAAALFDKVVVAVAYSRNKKPFFNIDERVEIAREVLGHYPNVEVRSFGGLLRDFVREQNGRVIVRGLRAMSDFEYEFQMAGMNRHLLPDVETLFMTPSDQYQFISGTIVREIAQLGGDVSKFVFPSVERWLQAKAKARREQAETE</sequence>
<reference key="1">
    <citation type="journal article" date="2006" name="J. Bacteriol.">
        <title>Comparison of the genome sequence of the poultry pathogen Bordetella avium with those of B. bronchiseptica, B. pertussis, and B. parapertussis reveals extensive diversity in surface structures associated with host interaction.</title>
        <authorList>
            <person name="Sebaihia M."/>
            <person name="Preston A."/>
            <person name="Maskell D.J."/>
            <person name="Kuzmiak H."/>
            <person name="Connell T.D."/>
            <person name="King N.D."/>
            <person name="Orndorff P.E."/>
            <person name="Miyamoto D.M."/>
            <person name="Thomson N.R."/>
            <person name="Harris D."/>
            <person name="Goble A."/>
            <person name="Lord A."/>
            <person name="Murphy L."/>
            <person name="Quail M.A."/>
            <person name="Rutter S."/>
            <person name="Squares R."/>
            <person name="Squares S."/>
            <person name="Woodward J."/>
            <person name="Parkhill J."/>
            <person name="Temple L.M."/>
        </authorList>
    </citation>
    <scope>NUCLEOTIDE SEQUENCE [LARGE SCALE GENOMIC DNA]</scope>
    <source>
        <strain>197N</strain>
    </source>
</reference>
<evidence type="ECO:0000255" key="1">
    <source>
        <dbReference type="HAMAP-Rule" id="MF_00151"/>
    </source>
</evidence>
<comment type="function">
    <text evidence="1">Reversibly transfers an adenylyl group from ATP to 4'-phosphopantetheine, yielding dephospho-CoA (dPCoA) and pyrophosphate.</text>
</comment>
<comment type="catalytic activity">
    <reaction evidence="1">
        <text>(R)-4'-phosphopantetheine + ATP + H(+) = 3'-dephospho-CoA + diphosphate</text>
        <dbReference type="Rhea" id="RHEA:19801"/>
        <dbReference type="ChEBI" id="CHEBI:15378"/>
        <dbReference type="ChEBI" id="CHEBI:30616"/>
        <dbReference type="ChEBI" id="CHEBI:33019"/>
        <dbReference type="ChEBI" id="CHEBI:57328"/>
        <dbReference type="ChEBI" id="CHEBI:61723"/>
        <dbReference type="EC" id="2.7.7.3"/>
    </reaction>
</comment>
<comment type="cofactor">
    <cofactor evidence="1">
        <name>Mg(2+)</name>
        <dbReference type="ChEBI" id="CHEBI:18420"/>
    </cofactor>
</comment>
<comment type="pathway">
    <text evidence="1">Cofactor biosynthesis; coenzyme A biosynthesis; CoA from (R)-pantothenate: step 4/5.</text>
</comment>
<comment type="subunit">
    <text evidence="1">Homohexamer.</text>
</comment>
<comment type="subcellular location">
    <subcellularLocation>
        <location evidence="1">Cytoplasm</location>
    </subcellularLocation>
</comment>
<comment type="similarity">
    <text evidence="1">Belongs to the bacterial CoaD family.</text>
</comment>
<dbReference type="EC" id="2.7.7.3" evidence="1"/>
<dbReference type="EMBL" id="AM167904">
    <property type="protein sequence ID" value="CAJ48168.1"/>
    <property type="molecule type" value="Genomic_DNA"/>
</dbReference>
<dbReference type="RefSeq" id="WP_012416259.1">
    <property type="nucleotide sequence ID" value="NC_010645.1"/>
</dbReference>
<dbReference type="SMR" id="Q2KY40"/>
<dbReference type="STRING" id="360910.BAV0563"/>
<dbReference type="KEGG" id="bav:BAV0563"/>
<dbReference type="eggNOG" id="COG0669">
    <property type="taxonomic scope" value="Bacteria"/>
</dbReference>
<dbReference type="HOGENOM" id="CLU_100149_0_1_4"/>
<dbReference type="OrthoDB" id="9806661at2"/>
<dbReference type="UniPathway" id="UPA00241">
    <property type="reaction ID" value="UER00355"/>
</dbReference>
<dbReference type="Proteomes" id="UP000001977">
    <property type="component" value="Chromosome"/>
</dbReference>
<dbReference type="GO" id="GO:0005737">
    <property type="term" value="C:cytoplasm"/>
    <property type="evidence" value="ECO:0007669"/>
    <property type="project" value="UniProtKB-SubCell"/>
</dbReference>
<dbReference type="GO" id="GO:0005524">
    <property type="term" value="F:ATP binding"/>
    <property type="evidence" value="ECO:0007669"/>
    <property type="project" value="UniProtKB-KW"/>
</dbReference>
<dbReference type="GO" id="GO:0004595">
    <property type="term" value="F:pantetheine-phosphate adenylyltransferase activity"/>
    <property type="evidence" value="ECO:0007669"/>
    <property type="project" value="UniProtKB-UniRule"/>
</dbReference>
<dbReference type="GO" id="GO:0015937">
    <property type="term" value="P:coenzyme A biosynthetic process"/>
    <property type="evidence" value="ECO:0007669"/>
    <property type="project" value="UniProtKB-UniRule"/>
</dbReference>
<dbReference type="CDD" id="cd02163">
    <property type="entry name" value="PPAT"/>
    <property type="match status" value="1"/>
</dbReference>
<dbReference type="Gene3D" id="3.40.50.620">
    <property type="entry name" value="HUPs"/>
    <property type="match status" value="1"/>
</dbReference>
<dbReference type="HAMAP" id="MF_00151">
    <property type="entry name" value="PPAT_bact"/>
    <property type="match status" value="1"/>
</dbReference>
<dbReference type="InterPro" id="IPR004821">
    <property type="entry name" value="Cyt_trans-like"/>
</dbReference>
<dbReference type="InterPro" id="IPR001980">
    <property type="entry name" value="PPAT"/>
</dbReference>
<dbReference type="InterPro" id="IPR014729">
    <property type="entry name" value="Rossmann-like_a/b/a_fold"/>
</dbReference>
<dbReference type="NCBIfam" id="TIGR01510">
    <property type="entry name" value="coaD_prev_kdtB"/>
    <property type="match status" value="1"/>
</dbReference>
<dbReference type="NCBIfam" id="TIGR00125">
    <property type="entry name" value="cyt_tran_rel"/>
    <property type="match status" value="1"/>
</dbReference>
<dbReference type="PANTHER" id="PTHR21342">
    <property type="entry name" value="PHOSPHOPANTETHEINE ADENYLYLTRANSFERASE"/>
    <property type="match status" value="1"/>
</dbReference>
<dbReference type="PANTHER" id="PTHR21342:SF1">
    <property type="entry name" value="PHOSPHOPANTETHEINE ADENYLYLTRANSFERASE"/>
    <property type="match status" value="1"/>
</dbReference>
<dbReference type="Pfam" id="PF01467">
    <property type="entry name" value="CTP_transf_like"/>
    <property type="match status" value="1"/>
</dbReference>
<dbReference type="PRINTS" id="PR01020">
    <property type="entry name" value="LPSBIOSNTHSS"/>
</dbReference>
<dbReference type="SUPFAM" id="SSF52374">
    <property type="entry name" value="Nucleotidylyl transferase"/>
    <property type="match status" value="1"/>
</dbReference>
<organism>
    <name type="scientific">Bordetella avium (strain 197N)</name>
    <dbReference type="NCBI Taxonomy" id="360910"/>
    <lineage>
        <taxon>Bacteria</taxon>
        <taxon>Pseudomonadati</taxon>
        <taxon>Pseudomonadota</taxon>
        <taxon>Betaproteobacteria</taxon>
        <taxon>Burkholderiales</taxon>
        <taxon>Alcaligenaceae</taxon>
        <taxon>Bordetella</taxon>
    </lineage>
</organism>